<gene>
    <name type="ordered locus">Os11g0649700</name>
    <name type="ordered locus">LOC_Os11g42970</name>
    <name type="ORF">OsJ_01639</name>
</gene>
<name>CSPLK_ORYSJ</name>
<keyword id="KW-1003">Cell membrane</keyword>
<keyword id="KW-0472">Membrane</keyword>
<keyword id="KW-1185">Reference proteome</keyword>
<keyword id="KW-0812">Transmembrane</keyword>
<keyword id="KW-1133">Transmembrane helix</keyword>
<accession>Q2R0D1</accession>
<accession>A0A0P0Y5C7</accession>
<accession>B9EW99</accession>
<comment type="subunit">
    <text evidence="1">Homodimer and heterodimers.</text>
</comment>
<comment type="subcellular location">
    <subcellularLocation>
        <location evidence="1">Cell membrane</location>
        <topology evidence="1">Multi-pass membrane protein</topology>
    </subcellularLocation>
</comment>
<comment type="similarity">
    <text evidence="3">Belongs to the Casparian strip membrane proteins (CASP) family.</text>
</comment>
<comment type="sequence caution" evidence="3">
    <conflict type="erroneous gene model prediction">
        <sequence resource="EMBL-CDS" id="EEE54504"/>
    </conflict>
</comment>
<comment type="sequence caution" evidence="3">
    <conflict type="frameshift">
        <sequence resource="EMBL-CDS" id="EEE54504"/>
    </conflict>
</comment>
<organism>
    <name type="scientific">Oryza sativa subsp. japonica</name>
    <name type="common">Rice</name>
    <dbReference type="NCBI Taxonomy" id="39947"/>
    <lineage>
        <taxon>Eukaryota</taxon>
        <taxon>Viridiplantae</taxon>
        <taxon>Streptophyta</taxon>
        <taxon>Embryophyta</taxon>
        <taxon>Tracheophyta</taxon>
        <taxon>Spermatophyta</taxon>
        <taxon>Magnoliopsida</taxon>
        <taxon>Liliopsida</taxon>
        <taxon>Poales</taxon>
        <taxon>Poaceae</taxon>
        <taxon>BOP clade</taxon>
        <taxon>Oryzoideae</taxon>
        <taxon>Oryzeae</taxon>
        <taxon>Oryzinae</taxon>
        <taxon>Oryza</taxon>
        <taxon>Oryza sativa</taxon>
    </lineage>
</organism>
<reference key="1">
    <citation type="journal article" date="2005" name="BMC Biol.">
        <title>The sequence of rice chromosomes 11 and 12, rich in disease resistance genes and recent gene duplications.</title>
        <authorList>
            <consortium name="The rice chromosomes 11 and 12 sequencing consortia"/>
        </authorList>
    </citation>
    <scope>NUCLEOTIDE SEQUENCE [LARGE SCALE GENOMIC DNA]</scope>
    <source>
        <strain>cv. Nipponbare</strain>
    </source>
</reference>
<reference key="2">
    <citation type="journal article" date="2005" name="Nature">
        <title>The map-based sequence of the rice genome.</title>
        <authorList>
            <consortium name="International rice genome sequencing project (IRGSP)"/>
        </authorList>
    </citation>
    <scope>NUCLEOTIDE SEQUENCE [LARGE SCALE GENOMIC DNA]</scope>
    <source>
        <strain>cv. Nipponbare</strain>
    </source>
</reference>
<reference key="3">
    <citation type="journal article" date="2008" name="Nucleic Acids Res.">
        <title>The rice annotation project database (RAP-DB): 2008 update.</title>
        <authorList>
            <consortium name="The rice annotation project (RAP)"/>
        </authorList>
    </citation>
    <scope>GENOME REANNOTATION</scope>
    <source>
        <strain>cv. Nipponbare</strain>
    </source>
</reference>
<reference key="4">
    <citation type="journal article" date="2013" name="Rice">
        <title>Improvement of the Oryza sativa Nipponbare reference genome using next generation sequence and optical map data.</title>
        <authorList>
            <person name="Kawahara Y."/>
            <person name="de la Bastide M."/>
            <person name="Hamilton J.P."/>
            <person name="Kanamori H."/>
            <person name="McCombie W.R."/>
            <person name="Ouyang S."/>
            <person name="Schwartz D.C."/>
            <person name="Tanaka T."/>
            <person name="Wu J."/>
            <person name="Zhou S."/>
            <person name="Childs K.L."/>
            <person name="Davidson R.M."/>
            <person name="Lin H."/>
            <person name="Quesada-Ocampo L."/>
            <person name="Vaillancourt B."/>
            <person name="Sakai H."/>
            <person name="Lee S.S."/>
            <person name="Kim J."/>
            <person name="Numa H."/>
            <person name="Itoh T."/>
            <person name="Buell C.R."/>
            <person name="Matsumoto T."/>
        </authorList>
    </citation>
    <scope>GENOME REANNOTATION</scope>
    <source>
        <strain>cv. Nipponbare</strain>
    </source>
</reference>
<reference key="5">
    <citation type="journal article" date="2005" name="PLoS Biol.">
        <title>The genomes of Oryza sativa: a history of duplications.</title>
        <authorList>
            <person name="Yu J."/>
            <person name="Wang J."/>
            <person name="Lin W."/>
            <person name="Li S."/>
            <person name="Li H."/>
            <person name="Zhou J."/>
            <person name="Ni P."/>
            <person name="Dong W."/>
            <person name="Hu S."/>
            <person name="Zeng C."/>
            <person name="Zhang J."/>
            <person name="Zhang Y."/>
            <person name="Li R."/>
            <person name="Xu Z."/>
            <person name="Li S."/>
            <person name="Li X."/>
            <person name="Zheng H."/>
            <person name="Cong L."/>
            <person name="Lin L."/>
            <person name="Yin J."/>
            <person name="Geng J."/>
            <person name="Li G."/>
            <person name="Shi J."/>
            <person name="Liu J."/>
            <person name="Lv H."/>
            <person name="Li J."/>
            <person name="Wang J."/>
            <person name="Deng Y."/>
            <person name="Ran L."/>
            <person name="Shi X."/>
            <person name="Wang X."/>
            <person name="Wu Q."/>
            <person name="Li C."/>
            <person name="Ren X."/>
            <person name="Wang J."/>
            <person name="Wang X."/>
            <person name="Li D."/>
            <person name="Liu D."/>
            <person name="Zhang X."/>
            <person name="Ji Z."/>
            <person name="Zhao W."/>
            <person name="Sun Y."/>
            <person name="Zhang Z."/>
            <person name="Bao J."/>
            <person name="Han Y."/>
            <person name="Dong L."/>
            <person name="Ji J."/>
            <person name="Chen P."/>
            <person name="Wu S."/>
            <person name="Liu J."/>
            <person name="Xiao Y."/>
            <person name="Bu D."/>
            <person name="Tan J."/>
            <person name="Yang L."/>
            <person name="Ye C."/>
            <person name="Zhang J."/>
            <person name="Xu J."/>
            <person name="Zhou Y."/>
            <person name="Yu Y."/>
            <person name="Zhang B."/>
            <person name="Zhuang S."/>
            <person name="Wei H."/>
            <person name="Liu B."/>
            <person name="Lei M."/>
            <person name="Yu H."/>
            <person name="Li Y."/>
            <person name="Xu H."/>
            <person name="Wei S."/>
            <person name="He X."/>
            <person name="Fang L."/>
            <person name="Zhang Z."/>
            <person name="Zhang Y."/>
            <person name="Huang X."/>
            <person name="Su Z."/>
            <person name="Tong W."/>
            <person name="Li J."/>
            <person name="Tong Z."/>
            <person name="Li S."/>
            <person name="Ye J."/>
            <person name="Wang L."/>
            <person name="Fang L."/>
            <person name="Lei T."/>
            <person name="Chen C.-S."/>
            <person name="Chen H.-C."/>
            <person name="Xu Z."/>
            <person name="Li H."/>
            <person name="Huang H."/>
            <person name="Zhang F."/>
            <person name="Xu H."/>
            <person name="Li N."/>
            <person name="Zhao C."/>
            <person name="Li S."/>
            <person name="Dong L."/>
            <person name="Huang Y."/>
            <person name="Li L."/>
            <person name="Xi Y."/>
            <person name="Qi Q."/>
            <person name="Li W."/>
            <person name="Zhang B."/>
            <person name="Hu W."/>
            <person name="Zhang Y."/>
            <person name="Tian X."/>
            <person name="Jiao Y."/>
            <person name="Liang X."/>
            <person name="Jin J."/>
            <person name="Gao L."/>
            <person name="Zheng W."/>
            <person name="Hao B."/>
            <person name="Liu S.-M."/>
            <person name="Wang W."/>
            <person name="Yuan L."/>
            <person name="Cao M."/>
            <person name="McDermott J."/>
            <person name="Samudrala R."/>
            <person name="Wang J."/>
            <person name="Wong G.K.-S."/>
            <person name="Yang H."/>
        </authorList>
    </citation>
    <scope>NUCLEOTIDE SEQUENCE [LARGE SCALE GENOMIC DNA]</scope>
    <source>
        <strain>cv. Nipponbare</strain>
    </source>
</reference>
<reference key="6">
    <citation type="journal article" date="2003" name="Science">
        <title>Collection, mapping, and annotation of over 28,000 cDNA clones from japonica rice.</title>
        <authorList>
            <consortium name="The rice full-length cDNA consortium"/>
        </authorList>
    </citation>
    <scope>NUCLEOTIDE SEQUENCE [LARGE SCALE MRNA]</scope>
    <source>
        <strain>cv. Nipponbare</strain>
    </source>
</reference>
<reference key="7">
    <citation type="journal article" date="2014" name="Plant Physiol.">
        <title>Functional and evolutionary analysis of the CASPARIAN STRIP MEMBRANE DOMAIN PROTEIN family.</title>
        <authorList>
            <person name="Roppolo D."/>
            <person name="Boeckmann B."/>
            <person name="Pfister A."/>
            <person name="Boutet E."/>
            <person name="Rubio M.C."/>
            <person name="Denervaud-Tendon V."/>
            <person name="Vermeer J.E."/>
            <person name="Gheyselinck J."/>
            <person name="Xenarios I."/>
            <person name="Geldner N."/>
        </authorList>
    </citation>
    <scope>GENE FAMILY</scope>
    <scope>NOMENCLATURE</scope>
</reference>
<feature type="chain" id="PRO_0000391597" description="CASP-like protein 1U2">
    <location>
        <begin position="1"/>
        <end position="184"/>
    </location>
</feature>
<feature type="topological domain" description="Cytoplasmic" evidence="2">
    <location>
        <begin position="1"/>
        <end position="16"/>
    </location>
</feature>
<feature type="transmembrane region" description="Helical" evidence="2">
    <location>
        <begin position="17"/>
        <end position="37"/>
    </location>
</feature>
<feature type="topological domain" description="Extracellular" evidence="2">
    <location>
        <begin position="38"/>
        <end position="62"/>
    </location>
</feature>
<feature type="transmembrane region" description="Helical" evidence="2">
    <location>
        <begin position="63"/>
        <end position="83"/>
    </location>
</feature>
<feature type="topological domain" description="Cytoplasmic" evidence="2">
    <location>
        <begin position="84"/>
        <end position="100"/>
    </location>
</feature>
<feature type="transmembrane region" description="Helical" evidence="2">
    <location>
        <begin position="101"/>
        <end position="121"/>
    </location>
</feature>
<feature type="topological domain" description="Extracellular" evidence="2">
    <location>
        <begin position="122"/>
        <end position="153"/>
    </location>
</feature>
<feature type="transmembrane region" description="Helical" evidence="2">
    <location>
        <begin position="154"/>
        <end position="174"/>
    </location>
</feature>
<feature type="topological domain" description="Cytoplasmic" evidence="2">
    <location>
        <begin position="175"/>
        <end position="184"/>
    </location>
</feature>
<feature type="sequence conflict" description="In Ref. 5; EEE54504." evidence="3" ref="5">
    <original>A</original>
    <variation>P</variation>
    <location>
        <position position="140"/>
    </location>
</feature>
<proteinExistence type="evidence at transcript level"/>
<evidence type="ECO:0000250" key="1"/>
<evidence type="ECO:0000255" key="2"/>
<evidence type="ECO:0000305" key="3"/>
<protein>
    <recommendedName>
        <fullName>CASP-like protein 1U2</fullName>
        <shortName>OsCASPL1U2</shortName>
    </recommendedName>
</protein>
<dbReference type="EMBL" id="DP000010">
    <property type="protein sequence ID" value="ABA95000.1"/>
    <property type="molecule type" value="Genomic_DNA"/>
</dbReference>
<dbReference type="EMBL" id="AP008217">
    <property type="protein sequence ID" value="BAF28741.1"/>
    <property type="molecule type" value="Genomic_DNA"/>
</dbReference>
<dbReference type="EMBL" id="AP014967">
    <property type="protein sequence ID" value="BAT15073.1"/>
    <property type="molecule type" value="Genomic_DNA"/>
</dbReference>
<dbReference type="EMBL" id="CM000138">
    <property type="protein sequence ID" value="EEE54504.1"/>
    <property type="status" value="ALT_SEQ"/>
    <property type="molecule type" value="Genomic_DNA"/>
</dbReference>
<dbReference type="EMBL" id="AK059842">
    <property type="protein sequence ID" value="BAG87163.1"/>
    <property type="molecule type" value="mRNA"/>
</dbReference>
<dbReference type="RefSeq" id="XP_015615699.1">
    <property type="nucleotide sequence ID" value="XM_015760213.1"/>
</dbReference>
<dbReference type="RefSeq" id="XP_015615700.1">
    <property type="nucleotide sequence ID" value="XM_015760214.1"/>
</dbReference>
<dbReference type="FunCoup" id="Q2R0D1">
    <property type="interactions" value="764"/>
</dbReference>
<dbReference type="PaxDb" id="39947-Q2R0D1"/>
<dbReference type="EnsemblPlants" id="Os11t0649700-01">
    <property type="protein sequence ID" value="Os11t0649700-01"/>
    <property type="gene ID" value="Os11g0649700"/>
</dbReference>
<dbReference type="GeneID" id="4351034"/>
<dbReference type="Gramene" id="Os11t0649700-01">
    <property type="protein sequence ID" value="Os11t0649700-01"/>
    <property type="gene ID" value="Os11g0649700"/>
</dbReference>
<dbReference type="KEGG" id="dosa:Os11g0649700"/>
<dbReference type="KEGG" id="osa:4351034"/>
<dbReference type="eggNOG" id="ENOG502R6RW">
    <property type="taxonomic scope" value="Eukaryota"/>
</dbReference>
<dbReference type="HOGENOM" id="CLU_117400_0_0_1"/>
<dbReference type="InParanoid" id="Q2R0D1"/>
<dbReference type="OMA" id="QISACTG"/>
<dbReference type="OrthoDB" id="668094at2759"/>
<dbReference type="Proteomes" id="UP000000763">
    <property type="component" value="Chromosome 11"/>
</dbReference>
<dbReference type="Proteomes" id="UP000007752">
    <property type="component" value="Chromosome 1"/>
</dbReference>
<dbReference type="Proteomes" id="UP000059680">
    <property type="component" value="Chromosome 11"/>
</dbReference>
<dbReference type="GO" id="GO:0005886">
    <property type="term" value="C:plasma membrane"/>
    <property type="evidence" value="ECO:0007669"/>
    <property type="project" value="UniProtKB-SubCell"/>
</dbReference>
<dbReference type="InterPro" id="IPR006459">
    <property type="entry name" value="CASP/CASPL"/>
</dbReference>
<dbReference type="InterPro" id="IPR006702">
    <property type="entry name" value="CASP_dom"/>
</dbReference>
<dbReference type="InterPro" id="IPR044173">
    <property type="entry name" value="CASPL"/>
</dbReference>
<dbReference type="NCBIfam" id="TIGR01569">
    <property type="entry name" value="A_tha_TIGR01569"/>
    <property type="match status" value="1"/>
</dbReference>
<dbReference type="PANTHER" id="PTHR36488">
    <property type="entry name" value="CASP-LIKE PROTEIN 1U1"/>
    <property type="match status" value="1"/>
</dbReference>
<dbReference type="PANTHER" id="PTHR36488:SF1">
    <property type="entry name" value="CASP-LIKE PROTEIN 1U2"/>
    <property type="match status" value="1"/>
</dbReference>
<dbReference type="Pfam" id="PF04535">
    <property type="entry name" value="CASP_dom"/>
    <property type="match status" value="1"/>
</dbReference>
<sequence length="184" mass="18834">MSYGCQVSDDEPNGSKAVSLLLRLSTLALALTSAVVMATASECTVVQLNGVVATITYKDFPPFVYLVGFNIAAAMLEAAAIYLRLSTGGGDDDDEGFKGKLPGILLVVIDVAVQALVYTATGGAFAAVSAYGPQINACGAGAGRFCGQVHQSKLLSFAGSAAVGLAVVFRDVSLPFSLWPTSSD</sequence>